<name>LCND_LACLC</name>
<feature type="chain" id="PRO_0000201879" description="Lactococcin A secretion protein LcnD">
    <location>
        <begin position="1"/>
        <end position="474"/>
    </location>
</feature>
<feature type="topological domain" description="Cytoplasmic" evidence="1">
    <location>
        <begin position="1"/>
        <end position="21"/>
    </location>
</feature>
<feature type="transmembrane region" description="Helical" evidence="1">
    <location>
        <begin position="22"/>
        <end position="44"/>
    </location>
</feature>
<feature type="topological domain" description="Extracellular" evidence="1">
    <location>
        <begin position="45"/>
        <end position="474"/>
    </location>
</feature>
<gene>
    <name type="primary">lcnD</name>
</gene>
<sequence>MFDKKLLESSELYDKRYRNFSTLIILPLFILLVGGVIFTFFAHKELTVISTGSIEPTKIVAKIQSTNANPIIENNLKEGEAVKENSLLLKYNGTPEQTQLSELLTQKKQALDKKVQLDLLQRSLTNEKNEFPTADSFGYEKSFENYEAQVKSLEATIQKSNQAVEDQNKSTESQKQAIQNQVATLQQAIQNYSEIENAVSSGGGVSQDNPYLSQYNSYQAQQATLEADLKNQKNPDETAKQAAKSQEESLKSQFLSGLASSKDSLKSQIQSFNVQESSLTGSNAYDNSQSSQILTLKSQALSASNKEMTDLNSTLTDLETKISLQKQDDQYSQVFAEQAGVLHVLPDILGMKKIPIGTPIAEIYPLLKSETQVNLTSYIPSTQISGMKVGQKVRFTVQQNLPQPEILTGIINQIDSAPTAFKEGNAYKVSATTTINAKDLPNIRYGLQGKTVTIIGKKTYFNYFLDKIMGRGNQ</sequence>
<evidence type="ECO:0000305" key="1"/>
<accession>P0A3G6</accession>
<accession>Q00565</accession>
<comment type="function">
    <text>Involved in the secretion of lactococcin A.</text>
</comment>
<comment type="subcellular location">
    <subcellularLocation>
        <location>Cell membrane</location>
        <topology>Single-pass type II membrane protein</topology>
    </subcellularLocation>
</comment>
<comment type="similarity">
    <text evidence="1">Belongs to the membrane fusion protein (MFP) (TC 8.A.1) family.</text>
</comment>
<organism>
    <name type="scientific">Lactococcus lactis subsp. cremoris</name>
    <name type="common">Streptococcus cremoris</name>
    <dbReference type="NCBI Taxonomy" id="1359"/>
    <lineage>
        <taxon>Bacteria</taxon>
        <taxon>Bacillati</taxon>
        <taxon>Bacillota</taxon>
        <taxon>Bacilli</taxon>
        <taxon>Lactobacillales</taxon>
        <taxon>Streptococcaceae</taxon>
        <taxon>Lactococcus</taxon>
    </lineage>
</organism>
<geneLocation type="plasmid">
    <name>p9B4-6</name>
</geneLocation>
<reference key="1">
    <citation type="journal article" date="1991" name="Appl. Environ. Microbiol.">
        <title>Organization and nucleotide sequences of two lactococcal bacteriocin operons.</title>
        <authorList>
            <person name="van Belkum M.J."/>
            <person name="Hayema B.J."/>
            <person name="Jeeninga R.E."/>
            <person name="Kok J."/>
            <person name="Venema G."/>
        </authorList>
    </citation>
    <scope>PARTIAL NUCLEOTIDE SEQUENCE [GENOMIC DNA]</scope>
    <source>
        <strain>9B4</strain>
        <plasmid>p9B4-6</plasmid>
    </source>
</reference>
<reference key="2">
    <citation type="journal article" date="1991" name="J. Bacteriol.">
        <title>Lactococcin A, a new bacteriocin from Lactococcus lactis subsp. cremoris: isolation and characterization of the protein and its gene.</title>
        <authorList>
            <person name="Holo H."/>
            <person name="Nilssen O."/>
            <person name="Nes I.F."/>
        </authorList>
    </citation>
    <scope>NUCLEOTIDE SEQUENCE [GENOMIC DNA] OF 421-474</scope>
    <source>
        <strain>LMG 2130</strain>
    </source>
</reference>
<proteinExistence type="inferred from homology"/>
<protein>
    <recommendedName>
        <fullName>Lactococcin A secretion protein LcnD</fullName>
    </recommendedName>
</protein>
<dbReference type="PIR" id="C39443">
    <property type="entry name" value="C39443"/>
</dbReference>
<dbReference type="RefSeq" id="WP_015081785.1">
    <property type="nucleotide sequence ID" value="NZ_WJUX01000113.1"/>
</dbReference>
<dbReference type="SMR" id="P0A3G6"/>
<dbReference type="GO" id="GO:0005886">
    <property type="term" value="C:plasma membrane"/>
    <property type="evidence" value="ECO:0007669"/>
    <property type="project" value="UniProtKB-SubCell"/>
</dbReference>
<dbReference type="GO" id="GO:0043213">
    <property type="term" value="P:bacteriocin transport"/>
    <property type="evidence" value="ECO:0007669"/>
    <property type="project" value="UniProtKB-KW"/>
</dbReference>
<dbReference type="GO" id="GO:0009306">
    <property type="term" value="P:protein secretion"/>
    <property type="evidence" value="ECO:0007669"/>
    <property type="project" value="InterPro"/>
</dbReference>
<dbReference type="Gene3D" id="2.40.30.170">
    <property type="match status" value="1"/>
</dbReference>
<dbReference type="InterPro" id="IPR005696">
    <property type="entry name" value="MesE/LcnD"/>
</dbReference>
<dbReference type="InterPro" id="IPR050739">
    <property type="entry name" value="MFP"/>
</dbReference>
<dbReference type="InterPro" id="IPR006144">
    <property type="entry name" value="Secretion_HlyD_CS"/>
</dbReference>
<dbReference type="NCBIfam" id="TIGR01000">
    <property type="entry name" value="bacteriocin_acc"/>
    <property type="match status" value="1"/>
</dbReference>
<dbReference type="PANTHER" id="PTHR30386">
    <property type="entry name" value="MEMBRANE FUSION SUBUNIT OF EMRAB-TOLC MULTIDRUG EFFLUX PUMP"/>
    <property type="match status" value="1"/>
</dbReference>
<dbReference type="PANTHER" id="PTHR30386:SF26">
    <property type="entry name" value="TRANSPORT PROTEIN COMB"/>
    <property type="match status" value="1"/>
</dbReference>
<dbReference type="Pfam" id="PF13437">
    <property type="entry name" value="HlyD_3"/>
    <property type="match status" value="1"/>
</dbReference>
<dbReference type="PROSITE" id="PS00543">
    <property type="entry name" value="HLYD_FAMILY"/>
    <property type="match status" value="1"/>
</dbReference>
<keyword id="KW-0080">Bacteriocin transport</keyword>
<keyword id="KW-1003">Cell membrane</keyword>
<keyword id="KW-0472">Membrane</keyword>
<keyword id="KW-0614">Plasmid</keyword>
<keyword id="KW-0653">Protein transport</keyword>
<keyword id="KW-0812">Transmembrane</keyword>
<keyword id="KW-1133">Transmembrane helix</keyword>
<keyword id="KW-0813">Transport</keyword>